<comment type="function">
    <text evidence="3 4 5 7 8">Transports trehalose monomycolate (TMM) to the cell wall (PubMed:22520756, PubMed:28698380, PubMed:31239378). Flips TMM across the inner membrane. Membrane potential is not required for this function (PubMed:28698380). Transports probably phosphatidylethanolamine (PE) as well. Binds specifically both TMM and PE, but not trehalose dimycolate (TDM). Also binds diacylglycerol (DAG) and other phospholipids, including phosphatidylglycerol (PG), phosphatidylinositol (PI), and cardiolipin (CDL) (PubMed:31113875). Contributes to membrane potential, cell wall composition, antibiotic susceptibility and fitness (PubMed:28703701).</text>
</comment>
<comment type="activity regulation">
    <text evidence="4 6 20">Inhibited by the antimycobacterial compound BM212, a pyrrole derivative (PubMed:28698380). Inhibited by the antitubercular drug SQ109. Inhibited by the adamantyl urea derivative AU1235, the indole carboxamide ICA38 and rimonabant, the antagonist for the cannabinoid receptor CB1. The dissociation constant (Kd) values for SQ109, AU1235, ICA38 and rimonabant are 1.65 uM, 0.29, 0.16 and 29.5, respectively (PubMed:30682372). Inhibitory effects are due to binding of the inhibitors at the proton-transportation channel most likely dissipating the transmembrane electrochemical proton gradient needed for substrate translocation (PubMed:30682372, PubMed:32512002).</text>
</comment>
<comment type="subunit">
    <text evidence="6 7 8">Monomer (PubMed:30682372, PubMed:31113875). Interacts with TtfA (via N-terminus); active trehalose monomycolate (TMM) biosynthesis is not required for the complex formation. Interacts with MSMEG_5308 (PubMed:31239378).</text>
</comment>
<comment type="subcellular location">
    <subcellularLocation>
        <location evidence="4 6 7">Cell inner membrane</location>
        <topology evidence="1 18 19">Multi-pass membrane protein</topology>
    </subcellularLocation>
    <subcellularLocation>
        <location evidence="8">Cell septum</location>
    </subcellularLocation>
    <subcellularLocation>
        <location evidence="8">Cell tip</location>
    </subcellularLocation>
    <text evidence="8">Colocalizes with TtfA to the cell poles and septa. Trehalose monomycolate (TMM) synthesis is not required for localization to the poles or septa.</text>
</comment>
<comment type="disruption phenotype">
    <text evidence="3 8">Cells lacking this gene are not viable (PubMed:22520756). Knockdown or depletion of this gene leads to accummulation of trehalose monomycolate (TMM) and lack of trehalose dimycolate (TDM) (PubMed:22520756, PubMed:31239378). Decrease in mycolylation of arabinogalactan (AG) (PubMed:22520756). Accumulates MSMEG_5308 protein (PubMed:31239378).</text>
</comment>
<comment type="biotechnology">
    <text evidence="4 6">This protein is a target of small molecules which can be validated by developed assays that measure the topology of trehalose monomycolate (TMM) in the inner membrane of mycobacterial spheroplasts after which they may be developed to future antituberculosis drugs (PubMed:28698380). Designing improved inhibitors against this protein could be achieved by avoiding direct contacts with the identified residues that can mutate to confer drug resistance. Alternatively, incorporating conformational flexibility in the inhibitors can allow them to adapt to structural changes in the inhibitor binding pocket due to mutation (PubMed:30682372).</text>
</comment>
<comment type="miscellaneous">
    <text evidence="9">Binds antitubercular compounds N-(4,4-dimethylcyclohexyl)-4,6-difluoro-1H-indole-2-carboxamide (NITD-349) and 1-((2,3-dihydrobenzo[b][1,4]dioxin-6-yl) methyl)-6',7'-dihydrospiro[piperidine-4,4'-thieno[3,2-c]pyran] (SPIRO) with Kd values of 0.05 uM and 0.8 uM, respectively.</text>
</comment>
<comment type="similarity">
    <text evidence="17">Belongs to the resistance-nodulation-cell division (RND) (TC 2.A.6) family. MmpL subfamily.</text>
</comment>
<organism evidence="21">
    <name type="scientific">Mycolicibacterium smegmatis (strain ATCC 700084 / mc(2)155)</name>
    <name type="common">Mycobacterium smegmatis</name>
    <dbReference type="NCBI Taxonomy" id="246196"/>
    <lineage>
        <taxon>Bacteria</taxon>
        <taxon>Bacillati</taxon>
        <taxon>Actinomycetota</taxon>
        <taxon>Actinomycetes</taxon>
        <taxon>Mycobacteriales</taxon>
        <taxon>Mycobacteriaceae</taxon>
        <taxon>Mycolicibacterium</taxon>
    </lineage>
</organism>
<feature type="chain" id="PRO_0000452686" description="Trehalose monomycolate exporter MmpL3">
    <location>
        <begin position="1"/>
        <end position="1013"/>
    </location>
</feature>
<feature type="topological domain" description="Cytoplasmic" evidence="18 19">
    <location>
        <begin position="1"/>
        <end position="14"/>
    </location>
</feature>
<feature type="transmembrane region" description="Helical" evidence="1">
    <location>
        <begin position="15"/>
        <end position="35"/>
    </location>
</feature>
<feature type="topological domain" description="Periplasmic" evidence="18 19">
    <location>
        <begin position="36"/>
        <end position="196"/>
    </location>
</feature>
<feature type="transmembrane region" description="Helical" evidence="1">
    <location>
        <begin position="197"/>
        <end position="217"/>
    </location>
</feature>
<feature type="transmembrane region" description="Helical" evidence="1">
    <location>
        <begin position="218"/>
        <end position="238"/>
    </location>
</feature>
<feature type="topological domain" description="Periplasmic" evidence="18 19">
    <location>
        <begin position="239"/>
        <end position="240"/>
    </location>
</feature>
<feature type="transmembrane region" description="Helical" evidence="1">
    <location>
        <begin position="241"/>
        <end position="261"/>
    </location>
</feature>
<feature type="topological domain" description="Cytoplasmic" evidence="18 19">
    <location>
        <begin position="262"/>
        <end position="290"/>
    </location>
</feature>
<feature type="transmembrane region" description="Helical" evidence="1">
    <location>
        <begin position="291"/>
        <end position="311"/>
    </location>
</feature>
<feature type="topological domain" description="Periplasmic" evidence="18 19">
    <location>
        <begin position="312"/>
        <end position="317"/>
    </location>
</feature>
<feature type="transmembrane region" description="Helical" evidence="1">
    <location>
        <begin position="318"/>
        <end position="338"/>
    </location>
</feature>
<feature type="topological domain" description="Cytoplasmic" evidence="18 19">
    <location>
        <begin position="339"/>
        <end position="401"/>
    </location>
</feature>
<feature type="transmembrane region" description="Helical" evidence="1">
    <location>
        <begin position="402"/>
        <end position="422"/>
    </location>
</feature>
<feature type="topological domain" description="Periplasmic" evidence="18 19">
    <location>
        <begin position="423"/>
        <end position="567"/>
    </location>
</feature>
<feature type="transmembrane region" description="Helical" evidence="1">
    <location>
        <begin position="568"/>
        <end position="588"/>
    </location>
</feature>
<feature type="topological domain" description="Cytoplasmic" evidence="18 19">
    <location>
        <begin position="589"/>
        <end position="591"/>
    </location>
</feature>
<feature type="transmembrane region" description="Helical" evidence="1">
    <location>
        <begin position="592"/>
        <end position="612"/>
    </location>
</feature>
<feature type="topological domain" description="Periplasmic" evidence="18 19">
    <location>
        <begin position="613"/>
        <end position="630"/>
    </location>
</feature>
<feature type="transmembrane region" description="Helical" evidence="1">
    <location>
        <begin position="631"/>
        <end position="651"/>
    </location>
</feature>
<feature type="topological domain" description="Cytoplasmic" evidence="18 19">
    <location>
        <begin position="652"/>
        <end position="678"/>
    </location>
</feature>
<feature type="transmembrane region" description="Helical" evidence="1">
    <location>
        <begin position="679"/>
        <end position="699"/>
    </location>
</feature>
<feature type="topological domain" description="Periplasmic" evidence="18 19">
    <location>
        <begin position="700"/>
        <end position="703"/>
    </location>
</feature>
<feature type="transmembrane region" description="Helical" evidence="1">
    <location>
        <begin position="704"/>
        <end position="724"/>
    </location>
</feature>
<feature type="topological domain" description="Cytoplasmic" evidence="18 19">
    <location>
        <begin position="725"/>
        <end position="1013"/>
    </location>
</feature>
<feature type="region of interest" description="Disordered" evidence="2">
    <location>
        <begin position="485"/>
        <end position="513"/>
    </location>
</feature>
<feature type="region of interest" description="Disordered" evidence="2">
    <location>
        <begin position="754"/>
        <end position="1013"/>
    </location>
</feature>
<feature type="compositionally biased region" description="Basic and acidic residues" evidence="2">
    <location>
        <begin position="493"/>
        <end position="512"/>
    </location>
</feature>
<feature type="compositionally biased region" description="Basic and acidic residues" evidence="2">
    <location>
        <begin position="757"/>
        <end position="772"/>
    </location>
</feature>
<feature type="compositionally biased region" description="Pro residues" evidence="2">
    <location>
        <begin position="792"/>
        <end position="803"/>
    </location>
</feature>
<feature type="compositionally biased region" description="Pro residues" evidence="2">
    <location>
        <begin position="820"/>
        <end position="829"/>
    </location>
</feature>
<feature type="compositionally biased region" description="Low complexity" evidence="2">
    <location>
        <begin position="842"/>
        <end position="867"/>
    </location>
</feature>
<feature type="compositionally biased region" description="Pro residues" evidence="2">
    <location>
        <begin position="875"/>
        <end position="885"/>
    </location>
</feature>
<feature type="compositionally biased region" description="Basic and acidic residues" evidence="2">
    <location>
        <begin position="973"/>
        <end position="996"/>
    </location>
</feature>
<feature type="binding site" evidence="7 31">
    <location>
        <begin position="40"/>
        <end position="44"/>
    </location>
    <ligand>
        <name>a 1,2-diacylglycero-3-phosphoethanolamine</name>
        <dbReference type="ChEBI" id="CHEBI:57613"/>
    </ligand>
</feature>
<feature type="binding site" evidence="6 26">
    <location>
        <position position="645"/>
    </location>
    <ligand>
        <name>SQ109</name>
        <dbReference type="ChEBI" id="CHEBI:188155"/>
        <note>inhibitor; antitubercular drug</note>
    </ligand>
</feature>
<feature type="site" description="Part of the proton-transportation channel" evidence="18 19">
    <location>
        <position position="256"/>
    </location>
</feature>
<feature type="site" description="Part of the proton-transportation channel" evidence="18 19">
    <location>
        <position position="257"/>
    </location>
</feature>
<feature type="site" description="Part of the proton transportation network" evidence="19">
    <location>
        <position position="591"/>
    </location>
</feature>
<feature type="site" description="Part of the proton-transportation channel" evidence="18 19 20">
    <location>
        <position position="645"/>
    </location>
</feature>
<feature type="site" description="Part of the proton-transportation channel" evidence="18 19">
    <location>
        <position position="646"/>
    </location>
</feature>
<feature type="site" description="Part of the proton transportation network" evidence="19">
    <location>
        <position position="647"/>
    </location>
</feature>
<feature type="sequence variant" description="Increases resistance to BM212 with 4-fold increase in minimal inhibitory concentration (MIC) to BM212 in liquid and solid media." evidence="4">
    <original>V</original>
    <variation>M</variation>
    <location>
        <position position="197"/>
    </location>
</feature>
<feature type="sequence variant" description="Growth defect in both liquid and solid media; confers resistance to SQ109 and AU1235 with 2-fold and 4-fold increased resistance, respectively; disrupted membrane potential; increased cell wall hydrophobicity; more sensitive to ampicillin and the hydrophobic antibiotics, rifampicin and erythromycin, but no change in sensitivity to chloramphenicol or kanamycin, compared to wild-type." evidence="5 6">
    <original>Y</original>
    <variation>C</variation>
    <location>
        <position position="257"/>
    </location>
</feature>
<feature type="sequence variant" description="Growth defect in both liquid and solid media; confers resistance to SQ109 and AU1235 with 4-fold and 33-fold increased resistance, respectively; disrupted membrane potential; no significant difference in cell wall hydrophobicity; more sensitive to ampicillin and the hydrophobic antibiotics, rifampicin and erythromycin, but no change in sensitivity to chloramphenicol or kanamycin, compared to wild-type." evidence="5 6">
    <original>S</original>
    <variation>A</variation>
    <location>
        <position position="293"/>
    </location>
</feature>
<feature type="sequence variant" description="Grows as wild-type in liquid media; weak binding to both SQ109 and ICA38 while the dissociation constant (Kd) value for AU1235 increases 6.6-fold compared with wild-type; 8-fold and 4-fold increased resistance to AU1235 and SQ109, respectively; disrupted membrane potential; increased cell wall hydrophobicity; more sensitive to ampicillin and the hydrophobic antibiotics, rifampicin and erythromycin, but no change in sensitivity to chloramphenicol or kanamycin, compared to wild-type." evidence="5 6">
    <original>S</original>
    <variation>T</variation>
    <location>
        <position position="293"/>
    </location>
</feature>
<feature type="sequence variant" description="Growth defect in certain liquid medium; severely reduced binding to SQ109 and AU1235; no change in resistance and 4-fold increased resistance to SQ109 and AU1235, respectively; disrupted membrane potential; increased cell wall hydrophobicity; more sensitive to ampicillin and the hydrophobic antibiotics, rifampicin and erythromycin, but no change in sensitivity to chloramphenicol or kanamycin, compared to wild-type." evidence="5 6">
    <original>I</original>
    <variation>F</variation>
    <location>
        <position position="297"/>
    </location>
</feature>
<feature type="sequence variant" description="Increases resistance to BM212 with 4-fold increase in minimal inhibitory concentration (MIC) to BM212 in liquid and solid media." evidence="4">
    <original>A</original>
    <variation>T</variation>
    <location>
        <position position="326"/>
    </location>
</feature>
<feature type="sequence variant" description="Rescues the growth defect of A-293 variant by partially restoring the membrane potential." evidence="5">
    <original>G</original>
    <variation>D</variation>
    <location>
        <position position="750"/>
    </location>
</feature>
<feature type="mutagenesis site" description="Binds to SQ109 with a dissociation constant (Kd) value similar to wild-type." evidence="6">
    <original>Q</original>
    <variation>R</variation>
    <location>
        <position position="40"/>
    </location>
</feature>
<feature type="mutagenesis site" description="Binds to ICA38 with a dissociation constant (Kd) value similar to wild-type." evidence="6">
    <original>I</original>
    <variation>R</variation>
    <location>
        <position position="194"/>
    </location>
</feature>
<feature type="mutagenesis site" description="Binds to SQ109, AU1235, ICA38 and rimonabant with a dissociation constant (Kd) values similar to wild-type; when associated with T-319; L-638 and V-686." evidence="6">
    <original>S</original>
    <variation>A</variation>
    <location>
        <position position="301"/>
    </location>
</feature>
<feature type="mutagenesis site" description="Confers resistance to ICA38." evidence="6">
    <original>T</original>
    <variation>I</variation>
    <location>
        <position position="316"/>
    </location>
</feature>
<feature type="mutagenesis site" description="Binds to SQ109, AU1235, ICA38 and rimonabant with a dissociation constant (Kd) values similar to wild-type; when associated with A-301; L-638 and V-686." evidence="6">
    <original>I</original>
    <variation>T</variation>
    <location>
        <position position="319"/>
    </location>
</feature>
<feature type="mutagenesis site" description="Binds to SQ109 with a dissociation constant (Kd) value similar to wild-type." evidence="6">
    <original>I</original>
    <variation>P</variation>
    <location>
        <position position="572"/>
    </location>
</feature>
<feature type="mutagenesis site" description="Confers resistance to ICA38." evidence="6">
    <original>S</original>
    <variation>I</variation>
    <location>
        <position position="596"/>
    </location>
</feature>
<feature type="mutagenesis site" description="Binds to SQ109, AU1235, ICA38 and rimonabant with a dissociation constant (Kd) value similar to wild-type; when associated with A-301; T-319 and V-686." evidence="6">
    <original>V</original>
    <variation>L</variation>
    <location>
        <position position="638"/>
    </location>
</feature>
<feature type="mutagenesis site" description="Binds to SQ109, AU1235, ICA38 and rimonabant with a dissociation constant (Kd) value similar to wild-type; when associated with A-301; T-319 and L-638." evidence="6">
    <original>L</original>
    <variation>V</variation>
    <location>
        <position position="686"/>
    </location>
</feature>
<feature type="mutagenesis site" description="Binds to ICA38 with a dissociation constant (Kd) value similar to wild-type." evidence="6">
    <original>V</original>
    <variation>G</variation>
    <location>
        <position position="688"/>
    </location>
</feature>
<feature type="mutagenesis site" description="Binds to ICA38 with a dissociation constant (Kd) value similar to wild-type." evidence="6">
    <original>V</original>
    <variation>G</variation>
    <location>
        <position position="689"/>
    </location>
</feature>
<feature type="mutagenesis site" description="Binds to SQ109 with a dissociation constant (Kd) value similar to wild-type." evidence="6">
    <original>A</original>
    <variation>T</variation>
    <location>
        <position position="705"/>
    </location>
</feature>
<feature type="helix" evidence="35">
    <location>
        <begin position="2"/>
        <end position="11"/>
    </location>
</feature>
<feature type="helix" evidence="35">
    <location>
        <begin position="13"/>
        <end position="31"/>
    </location>
</feature>
<feature type="helix" evidence="35">
    <location>
        <begin position="32"/>
        <end position="36"/>
    </location>
</feature>
<feature type="strand" evidence="34">
    <location>
        <begin position="37"/>
        <end position="40"/>
    </location>
</feature>
<feature type="strand" evidence="42">
    <location>
        <begin position="46"/>
        <end position="48"/>
    </location>
</feature>
<feature type="helix" evidence="35">
    <location>
        <begin position="49"/>
        <end position="61"/>
    </location>
</feature>
<feature type="helix" evidence="42">
    <location>
        <begin position="65"/>
        <end position="67"/>
    </location>
</feature>
<feature type="strand" evidence="35">
    <location>
        <begin position="70"/>
        <end position="73"/>
    </location>
</feature>
<feature type="strand" evidence="40">
    <location>
        <begin position="76"/>
        <end position="78"/>
    </location>
</feature>
<feature type="helix" evidence="35">
    <location>
        <begin position="84"/>
        <end position="100"/>
    </location>
</feature>
<feature type="turn" evidence="35">
    <location>
        <begin position="101"/>
        <end position="104"/>
    </location>
</feature>
<feature type="helix" evidence="35">
    <location>
        <begin position="111"/>
        <end position="113"/>
    </location>
</feature>
<feature type="strand" evidence="40">
    <location>
        <begin position="114"/>
        <end position="116"/>
    </location>
</feature>
<feature type="helix" evidence="35">
    <location>
        <begin position="120"/>
        <end position="123"/>
    </location>
</feature>
<feature type="strand" evidence="38">
    <location>
        <begin position="128"/>
        <end position="131"/>
    </location>
</feature>
<feature type="strand" evidence="35">
    <location>
        <begin position="133"/>
        <end position="136"/>
    </location>
</feature>
<feature type="helix" evidence="35">
    <location>
        <begin position="144"/>
        <end position="159"/>
    </location>
</feature>
<feature type="helix" evidence="35">
    <location>
        <begin position="162"/>
        <end position="164"/>
    </location>
</feature>
<feature type="strand" evidence="35">
    <location>
        <begin position="166"/>
        <end position="170"/>
    </location>
</feature>
<feature type="helix" evidence="35">
    <location>
        <begin position="171"/>
        <end position="191"/>
    </location>
</feature>
<feature type="helix" evidence="35">
    <location>
        <begin position="193"/>
        <end position="205"/>
    </location>
</feature>
<feature type="helix" evidence="35">
    <location>
        <begin position="208"/>
        <end position="232"/>
    </location>
</feature>
<feature type="turn" evidence="35">
    <location>
        <begin position="233"/>
        <end position="235"/>
    </location>
</feature>
<feature type="helix" evidence="35">
    <location>
        <begin position="242"/>
        <end position="248"/>
    </location>
</feature>
<feature type="helix" evidence="35">
    <location>
        <begin position="250"/>
        <end position="271"/>
    </location>
</feature>
<feature type="helix" evidence="35">
    <location>
        <begin position="275"/>
        <end position="301"/>
    </location>
</feature>
<feature type="helix" evidence="35">
    <location>
        <begin position="302"/>
        <end position="306"/>
    </location>
</feature>
<feature type="helix" evidence="35">
    <location>
        <begin position="310"/>
        <end position="330"/>
    </location>
</feature>
<feature type="helix" evidence="35">
    <location>
        <begin position="333"/>
        <end position="341"/>
    </location>
</feature>
<feature type="helix" evidence="35">
    <location>
        <begin position="342"/>
        <end position="346"/>
    </location>
</feature>
<feature type="strand" evidence="34">
    <location>
        <begin position="347"/>
        <end position="349"/>
    </location>
</feature>
<feature type="turn" evidence="34">
    <location>
        <begin position="350"/>
        <end position="353"/>
    </location>
</feature>
<feature type="strand" evidence="42">
    <location>
        <begin position="359"/>
        <end position="361"/>
    </location>
</feature>
<feature type="helix" evidence="40">
    <location>
        <begin position="365"/>
        <end position="376"/>
    </location>
</feature>
<feature type="helix" evidence="35">
    <location>
        <begin position="383"/>
        <end position="399"/>
    </location>
</feature>
<feature type="helix" evidence="35">
    <location>
        <begin position="402"/>
        <end position="414"/>
    </location>
</feature>
<feature type="helix" evidence="35">
    <location>
        <begin position="415"/>
        <end position="421"/>
    </location>
</feature>
<feature type="helix" evidence="35">
    <location>
        <begin position="429"/>
        <end position="431"/>
    </location>
</feature>
<feature type="helix" evidence="35">
    <location>
        <begin position="437"/>
        <end position="448"/>
    </location>
</feature>
<feature type="strand" evidence="39">
    <location>
        <begin position="450"/>
        <end position="453"/>
    </location>
</feature>
<feature type="strand" evidence="35">
    <location>
        <begin position="456"/>
        <end position="463"/>
    </location>
</feature>
<feature type="strand" evidence="39">
    <location>
        <begin position="464"/>
        <end position="467"/>
    </location>
</feature>
<feature type="helix" evidence="35">
    <location>
        <begin position="471"/>
        <end position="481"/>
    </location>
</feature>
<feature type="strand" evidence="36">
    <location>
        <begin position="490"/>
        <end position="492"/>
    </location>
</feature>
<feature type="helix" evidence="35">
    <location>
        <begin position="494"/>
        <end position="496"/>
    </location>
</feature>
<feature type="strand" evidence="35">
    <location>
        <begin position="497"/>
        <end position="500"/>
    </location>
</feature>
<feature type="strand" evidence="40">
    <location>
        <begin position="505"/>
        <end position="507"/>
    </location>
</feature>
<feature type="strand" evidence="35">
    <location>
        <begin position="513"/>
        <end position="521"/>
    </location>
</feature>
<feature type="helix" evidence="35">
    <location>
        <begin position="523"/>
        <end position="525"/>
    </location>
</feature>
<feature type="helix" evidence="35">
    <location>
        <begin position="526"/>
        <end position="534"/>
    </location>
</feature>
<feature type="strand" evidence="41">
    <location>
        <begin position="539"/>
        <end position="541"/>
    </location>
</feature>
<feature type="strand" evidence="35">
    <location>
        <begin position="542"/>
        <end position="548"/>
    </location>
</feature>
<feature type="helix" evidence="35">
    <location>
        <begin position="549"/>
        <end position="582"/>
    </location>
</feature>
<feature type="helix" evidence="35">
    <location>
        <begin position="587"/>
        <end position="611"/>
    </location>
</feature>
<feature type="turn" evidence="39">
    <location>
        <begin position="612"/>
        <end position="616"/>
    </location>
</feature>
<feature type="helix" evidence="35">
    <location>
        <begin position="617"/>
        <end position="620"/>
    </location>
</feature>
<feature type="helix" evidence="35">
    <location>
        <begin position="629"/>
        <end position="658"/>
    </location>
</feature>
<feature type="turn" evidence="35">
    <location>
        <begin position="659"/>
        <end position="661"/>
    </location>
</feature>
<feature type="helix" evidence="35">
    <location>
        <begin position="664"/>
        <end position="674"/>
    </location>
</feature>
<feature type="helix" evidence="35">
    <location>
        <begin position="676"/>
        <end position="693"/>
    </location>
</feature>
<feature type="helix" evidence="35">
    <location>
        <begin position="699"/>
        <end position="716"/>
    </location>
</feature>
<feature type="helix" evidence="35">
    <location>
        <begin position="718"/>
        <end position="721"/>
    </location>
</feature>
<feature type="helix" evidence="35">
    <location>
        <begin position="723"/>
        <end position="731"/>
    </location>
</feature>
<feature type="helix" evidence="35">
    <location>
        <begin position="732"/>
        <end position="736"/>
    </location>
</feature>
<feature type="helix" evidence="35">
    <location>
        <begin position="740"/>
        <end position="749"/>
    </location>
</feature>
<feature type="helix" evidence="37">
    <location>
        <begin position="751"/>
        <end position="759"/>
    </location>
</feature>
<feature type="strand" evidence="37">
    <location>
        <begin position="762"/>
        <end position="767"/>
    </location>
</feature>
<feature type="strand" evidence="37">
    <location>
        <begin position="774"/>
        <end position="777"/>
    </location>
</feature>
<proteinExistence type="evidence at protein level"/>
<sequence>MFAWWGRTVYQFRYIVIGVMVALCLGGGVYGISLGNHVTQSGFYDEGSQSVAASLIGDEVYGRDRTSHVVAILTPPDDKKVTDKAWQKKVTEELDQVVKDHEDQIVGWVGWLKAPDTTDPTVSAMKTQDLRHTFISIPLQGDDDDEILKNYQVVEPELQQVNGGDIRLAGLNPLASELTGTIGEDQKRAEVAAIPLVAVVLFFVFGTVIAAALPAIIGGLAIAGALGIMRLVAEFTPVHFFAQPVVTLIGLGIAIDYGLFIVSRFREEIAEGYDTEAAVRRTVMTSGRTVVFSAVIIVASSVPLLLFPQGFLKSITYAIIASVMLAAILSITVLAAALAILGPRVDALGVTTLLKIPFLANWQFSRRIIDWFAEKTQKTKTREEVERGFWGRLVNVVMKRPIAFAAPILVVMVLLIIPLGQLSLGGISEKYLPPDNAVRQSQEQFDKLFPGFRTEPLTLVMKREDGEPITDAQIADMRAKALTVSGFTDPDNDPEKMWKERPANDSGSKDPSVRVIQNGLENRNDAAKKIDELRALQPPHGIEVFVGGTPALEQDSIHSLFDKLPLMALILIVTTTVLMFLAFGSVVLPIKAALMSALTLGSTMGILTWMFVDGHGSGLMNYTPQPLMAPMIGLIIAVIWGLSTDYEVFLVSRMVEARERGMSTAEAIRIGTATTGRLITGAALILAVVAGAFVFSDLVMMKYLAFGLLIALLLDATIIRMFLVPAVMKLLGDDCWWAPRWMKRVQEKLGLGETELPDERKRPTVRESETDQRALVGVGAPPPPPRPHDPTHPAPEPVRPMPPMRSNAPSAAGTARISTPPQPPQPPQAPAQQAGDEPATTRFAMARNAVRNAVNSAVHGGAGSAAAPTERAPRPGGPAQPPAPPQREEREIESWLGALRGPAPAKNVPQPPAQPQRPSTDTTRAMPPQGRPPAGPADRGNENAPTTAFSAQRPPNGGAPADATTAIPTPPQREQEPSTEKLNTREDAPEDPETKRRGGGMSAQDLLRREGRL</sequence>
<reference evidence="21 23" key="1">
    <citation type="submission" date="2006-10" db="EMBL/GenBank/DDBJ databases">
        <authorList>
            <person name="Fleischmann R.D."/>
            <person name="Dodson R.J."/>
            <person name="Haft D.H."/>
            <person name="Merkel J.S."/>
            <person name="Nelson W.C."/>
            <person name="Fraser C.M."/>
        </authorList>
    </citation>
    <scope>NUCLEOTIDE SEQUENCE [LARGE SCALE GENOMIC DNA]</scope>
    <source>
        <strain evidence="23">ATCC 700084 / mc(2)155</strain>
    </source>
</reference>
<reference evidence="22 24" key="2">
    <citation type="journal article" date="2007" name="Genome Biol.">
        <title>Interrupted coding sequences in Mycobacterium smegmatis: authentic mutations or sequencing errors?</title>
        <authorList>
            <person name="Deshayes C."/>
            <person name="Perrodou E."/>
            <person name="Gallien S."/>
            <person name="Euphrasie D."/>
            <person name="Schaeffer C."/>
            <person name="Van-Dorsselaer A."/>
            <person name="Poch O."/>
            <person name="Lecompte O."/>
            <person name="Reyrat J.-M."/>
        </authorList>
    </citation>
    <scope>NUCLEOTIDE SEQUENCE [LARGE SCALE GENOMIC DNA]</scope>
    <source>
        <strain evidence="24">ATCC 700084 / mc(2)155</strain>
    </source>
</reference>
<reference evidence="22 24" key="3">
    <citation type="journal article" date="2009" name="Genome Res.">
        <title>Ortho-proteogenomics: multiple proteomes investigation through orthology and a new MS-based protocol.</title>
        <authorList>
            <person name="Gallien S."/>
            <person name="Perrodou E."/>
            <person name="Carapito C."/>
            <person name="Deshayes C."/>
            <person name="Reyrat J.-M."/>
            <person name="Van Dorsselaer A."/>
            <person name="Poch O."/>
            <person name="Schaeffer C."/>
            <person name="Lecompte O."/>
        </authorList>
    </citation>
    <scope>NUCLEOTIDE SEQUENCE [LARGE SCALE GENOMIC DNA]</scope>
    <source>
        <strain evidence="24">ATCC 700084 / mc(2)155</strain>
    </source>
</reference>
<reference key="4">
    <citation type="journal article" date="2012" name="Chem. Biol.">
        <title>MmpL genes are associated with mycolic acid metabolism in mycobacteria and corynebacteria.</title>
        <authorList>
            <person name="Varela C."/>
            <person name="Rittmann D."/>
            <person name="Singh A."/>
            <person name="Krumbach K."/>
            <person name="Bhatt K."/>
            <person name="Eggeling L."/>
            <person name="Besra G.S."/>
            <person name="Bhatt A."/>
        </authorList>
    </citation>
    <scope>FUNCTION</scope>
    <scope>DISRUPTION PHENOTYPE</scope>
    <source>
        <strain evidence="10">ATCC 700084 / mc(2)155</strain>
    </source>
</reference>
<reference key="5">
    <citation type="journal article" date="2017" name="Microbiology">
        <title>Mutations in MmpL3 alter membrane potential, hydrophobicity and antibiotic susceptibility in Mycobacterium smegmatis.</title>
        <authorList>
            <person name="McNeil M.B."/>
            <person name="Dennison D."/>
            <person name="Parish T."/>
        </authorList>
    </citation>
    <scope>FUNCTION</scope>
    <scope>VARIANTS CYS-257; ALA-293; THR-293; PHE-297 AND ASP-750</scope>
</reference>
<reference key="6">
    <citation type="journal article" date="2017" name="Proc. Natl. Acad. Sci. U.S.A.">
        <title>MmpL3 is the flippase for mycolic acids in mycobacteria.</title>
        <authorList>
            <person name="Xu Z."/>
            <person name="Meshcheryakov V.A."/>
            <person name="Poce G."/>
            <person name="Chng S.S."/>
        </authorList>
    </citation>
    <scope>FUNCTION</scope>
    <scope>ACTIVITY REGULATION</scope>
    <scope>SUBCELLULAR LOCATION</scope>
    <scope>BIOTECHNOLOGY</scope>
    <scope>VARIANTS MET-197 AND THR-326</scope>
    <source>
        <strain evidence="11">ATCC 700084 / mc(2)155</strain>
    </source>
</reference>
<reference key="7">
    <citation type="journal article" date="2019" name="MBio">
        <title>Two Accessory Proteins Govern MmpL3 Mycolic Acid Transport in Mycobacteria.</title>
        <authorList>
            <person name="Fay A."/>
            <person name="Czudnochowski N."/>
            <person name="Rock J.M."/>
            <person name="Johnson J.R."/>
            <person name="Krogan N.J."/>
            <person name="Rosenberg O."/>
            <person name="Glickman M.S."/>
        </authorList>
    </citation>
    <scope>FUNCTION</scope>
    <scope>INTERACTION WITH TTFA AND MSMEG_5308</scope>
    <scope>SUBCELLULAR LOCATION</scope>
    <scope>IDENTIFICATION BY MASS SPECTROMETRY</scope>
    <scope>DISRUPTION PHENOTYPE</scope>
    <source>
        <strain evidence="15">ATCC 700084 / mc(2)155</strain>
    </source>
</reference>
<reference evidence="25 26 27 28 29" key="8">
    <citation type="journal article" date="2019" name="Cell">
        <title>Crystal Structures of Membrane Transporter MmpL3, an Anti-TB Drug Target.</title>
        <authorList>
            <person name="Zhang B."/>
            <person name="Li J."/>
            <person name="Yang X."/>
            <person name="Wu L."/>
            <person name="Zhang J."/>
            <person name="Yang Y."/>
            <person name="Zhao Y."/>
            <person name="Zhang L."/>
            <person name="Yang X."/>
            <person name="Yang X."/>
            <person name="Cheng X."/>
            <person name="Liu Z."/>
            <person name="Jiang B."/>
            <person name="Jiang H."/>
            <person name="Guddat L.W."/>
            <person name="Yang H."/>
            <person name="Rao Z."/>
        </authorList>
    </citation>
    <scope>X-RAY CRYSTALLOGRAPHY (2.60 ANGSTROMS) OF 1-748 AND IN COMPLEXES WITH INHIBITORS AU1235; ICA38 AND RIMONABANT AND ANTITUBERCULAR DRUG SQ109</scope>
    <scope>ACTIVITY REGULATION</scope>
    <scope>SUBUNIT</scope>
    <scope>SUBCELLULAR LOCATION</scope>
    <scope>BIOTECHNOLOGY</scope>
    <scope>TOPOLOGY</scope>
    <scope>SITES</scope>
    <scope>VARIANTS CYS-257; ALA-293; THR-293 AND PHE-297</scope>
    <scope>MUTAGENESIS OF GLN-40; ILE-194; SER-301; THR-316; ILE-319; ILE-572; SER-596; VAL-638; LEU-686; VAL-688; VAL-689 AND ALA-705</scope>
    <source>
        <strain evidence="13">ATCC 700084 / mc(2)155</strain>
    </source>
</reference>
<reference evidence="30 31" key="9">
    <citation type="journal article" date="2019" name="Proc. Natl. Acad. Sci. U.S.A.">
        <title>MmpL3 is a lipid transporter that binds trehalose monomycolate and phosphatidylethanolamine.</title>
        <authorList>
            <person name="Su C.C."/>
            <person name="Klenotic P.A."/>
            <person name="Bolla J.R."/>
            <person name="Purdy G.E."/>
            <person name="Robinson C.V."/>
            <person name="Yu E.W."/>
        </authorList>
    </citation>
    <scope>X-RAY CRYSTALLOGRAPHY (2.59 ANGSTROMS) OF 1-773 AND IN COMPLEX WITH PHOSPHATIDYLETHANOLAMINE</scope>
    <scope>FUNCTION</scope>
    <scope>SUBUNIT</scope>
    <scope>SUBCELLULAR LOCATION</scope>
    <scope>TOPOLOGY</scope>
    <scope>SITES</scope>
    <source>
        <strain evidence="14">ATCC 700084 / mc(2)155</strain>
    </source>
</reference>
<reference evidence="32 33" key="10">
    <citation type="journal article" date="2020" name="J. Mol. Biol.">
        <title>Structural Basis for the Inhibition of Mycobacterial MmpL3 by NITD-349 and SPIRO.</title>
        <authorList>
            <person name="Yang X."/>
            <person name="Hu T."/>
            <person name="Yang X."/>
            <person name="Xu W."/>
            <person name="Yang H."/>
            <person name="Guddat L.W."/>
            <person name="Zhang B."/>
            <person name="Rao Z."/>
        </authorList>
    </citation>
    <scope>X-RAY CRYSTALLOGRAPHY (2.82 ANGSTROMS) OF 1-748 IN COMPLEXES WITH INHIBITORS NITD-349 AND SPIRO</scope>
    <scope>ACTIVITY REGULATION</scope>
    <scope>SITE</scope>
    <source>
        <strain evidence="16">ATCC 700084 / mc(2)155</strain>
    </source>
</reference>
<accession>A0QP27</accession>
<accession>I7G2R2</accession>
<keyword id="KW-0002">3D-structure</keyword>
<keyword id="KW-0997">Cell inner membrane</keyword>
<keyword id="KW-1003">Cell membrane</keyword>
<keyword id="KW-0961">Cell wall biogenesis/degradation</keyword>
<keyword id="KW-0445">Lipid transport</keyword>
<keyword id="KW-0472">Membrane</keyword>
<keyword id="KW-1185">Reference proteome</keyword>
<keyword id="KW-0812">Transmembrane</keyword>
<keyword id="KW-1133">Transmembrane helix</keyword>
<keyword id="KW-0813">Transport</keyword>
<dbReference type="EMBL" id="CP000480">
    <property type="protein sequence ID" value="ABK74656.1"/>
    <property type="molecule type" value="Genomic_DNA"/>
</dbReference>
<dbReference type="EMBL" id="CP001663">
    <property type="protein sequence ID" value="AFP36724.1"/>
    <property type="molecule type" value="Genomic_DNA"/>
</dbReference>
<dbReference type="RefSeq" id="WP_011726778.1">
    <property type="nucleotide sequence ID" value="NC_008596.1"/>
</dbReference>
<dbReference type="RefSeq" id="YP_884665.1">
    <property type="nucleotide sequence ID" value="NC_008596.1"/>
</dbReference>
<dbReference type="PDB" id="6AJF">
    <property type="method" value="X-ray"/>
    <property type="resolution" value="2.70 A"/>
    <property type="chains" value="A=1-748"/>
</dbReference>
<dbReference type="PDB" id="6AJG">
    <property type="method" value="X-ray"/>
    <property type="resolution" value="2.60 A"/>
    <property type="chains" value="A=1-748"/>
</dbReference>
<dbReference type="PDB" id="6AJH">
    <property type="method" value="X-ray"/>
    <property type="resolution" value="2.82 A"/>
    <property type="chains" value="A=1-748"/>
</dbReference>
<dbReference type="PDB" id="6AJI">
    <property type="method" value="X-ray"/>
    <property type="resolution" value="2.90 A"/>
    <property type="chains" value="A=1-748"/>
</dbReference>
<dbReference type="PDB" id="6AJJ">
    <property type="method" value="X-ray"/>
    <property type="resolution" value="2.79 A"/>
    <property type="chains" value="A=1-748"/>
</dbReference>
<dbReference type="PDB" id="6N40">
    <property type="method" value="X-ray"/>
    <property type="resolution" value="3.31 A"/>
    <property type="chains" value="A=1-773"/>
</dbReference>
<dbReference type="PDB" id="6OR2">
    <property type="method" value="X-ray"/>
    <property type="resolution" value="2.59 A"/>
    <property type="chains" value="A=1-773"/>
</dbReference>
<dbReference type="PDB" id="7C2M">
    <property type="method" value="X-ray"/>
    <property type="resolution" value="3.10 A"/>
    <property type="chains" value="A=1-748"/>
</dbReference>
<dbReference type="PDB" id="7C2N">
    <property type="method" value="X-ray"/>
    <property type="resolution" value="2.82 A"/>
    <property type="chains" value="A=1-748"/>
</dbReference>
<dbReference type="PDB" id="7K7M">
    <property type="method" value="X-ray"/>
    <property type="resolution" value="3.33 A"/>
    <property type="chains" value="A/B=1-780"/>
</dbReference>
<dbReference type="PDB" id="7K8A">
    <property type="method" value="EM"/>
    <property type="resolution" value="3.65 A"/>
    <property type="chains" value="A=1-1013"/>
</dbReference>
<dbReference type="PDB" id="7K8B">
    <property type="method" value="EM"/>
    <property type="resolution" value="2.94 A"/>
    <property type="chains" value="A=1-1013"/>
</dbReference>
<dbReference type="PDB" id="7K8C">
    <property type="method" value="EM"/>
    <property type="resolution" value="4.27 A"/>
    <property type="chains" value="A=1-1013"/>
</dbReference>
<dbReference type="PDB" id="7K8D">
    <property type="method" value="EM"/>
    <property type="resolution" value="4.33 A"/>
    <property type="chains" value="A=1-1013"/>
</dbReference>
<dbReference type="PDB" id="7N6B">
    <property type="method" value="EM"/>
    <property type="resolution" value="2.66 A"/>
    <property type="chains" value="A=1-1013"/>
</dbReference>
<dbReference type="PDB" id="7WNX">
    <property type="method" value="EM"/>
    <property type="resolution" value="3.36 A"/>
    <property type="chains" value="A=1-1013"/>
</dbReference>
<dbReference type="PDB" id="8QKK">
    <property type="method" value="EM"/>
    <property type="resolution" value="3.23 A"/>
    <property type="chains" value="A=2-773"/>
</dbReference>
<dbReference type="PDBsum" id="6AJF"/>
<dbReference type="PDBsum" id="6AJG"/>
<dbReference type="PDBsum" id="6AJH"/>
<dbReference type="PDBsum" id="6AJI"/>
<dbReference type="PDBsum" id="6AJJ"/>
<dbReference type="PDBsum" id="6N40"/>
<dbReference type="PDBsum" id="6OR2"/>
<dbReference type="PDBsum" id="7C2M"/>
<dbReference type="PDBsum" id="7C2N"/>
<dbReference type="PDBsum" id="7K7M"/>
<dbReference type="PDBsum" id="7K8A"/>
<dbReference type="PDBsum" id="7K8B"/>
<dbReference type="PDBsum" id="7K8C"/>
<dbReference type="PDBsum" id="7K8D"/>
<dbReference type="PDBsum" id="7N6B"/>
<dbReference type="PDBsum" id="7WNX"/>
<dbReference type="PDBsum" id="8QKK"/>
<dbReference type="EMDB" id="EMD-18464"/>
<dbReference type="EMDB" id="EMD-22724"/>
<dbReference type="EMDB" id="EMD-22725"/>
<dbReference type="EMDB" id="EMD-22726"/>
<dbReference type="EMDB" id="EMD-22728"/>
<dbReference type="EMDB" id="EMD-24206"/>
<dbReference type="EMDB" id="EMD-32634"/>
<dbReference type="SMR" id="A0QP27"/>
<dbReference type="STRING" id="246196.MSMEG_0250"/>
<dbReference type="BindingDB" id="A0QP27"/>
<dbReference type="ChEMBL" id="CHEMBL5465372"/>
<dbReference type="PaxDb" id="246196-MSMEI_0243"/>
<dbReference type="GeneID" id="93455173"/>
<dbReference type="KEGG" id="msb:LJ00_01255"/>
<dbReference type="KEGG" id="msg:MSMEI_0243"/>
<dbReference type="KEGG" id="msm:MSMEG_0250"/>
<dbReference type="PATRIC" id="fig|246196.19.peg.246"/>
<dbReference type="eggNOG" id="COG2409">
    <property type="taxonomic scope" value="Bacteria"/>
</dbReference>
<dbReference type="OrthoDB" id="7051771at2"/>
<dbReference type="Proteomes" id="UP000000757">
    <property type="component" value="Chromosome"/>
</dbReference>
<dbReference type="Proteomes" id="UP000006158">
    <property type="component" value="Chromosome"/>
</dbReference>
<dbReference type="GO" id="GO:0060187">
    <property type="term" value="C:cell pole"/>
    <property type="evidence" value="ECO:0000314"/>
    <property type="project" value="UniProtKB"/>
</dbReference>
<dbReference type="GO" id="GO:0030428">
    <property type="term" value="C:cell septum"/>
    <property type="evidence" value="ECO:0000314"/>
    <property type="project" value="UniProtKB"/>
</dbReference>
<dbReference type="GO" id="GO:0051286">
    <property type="term" value="C:cell tip"/>
    <property type="evidence" value="ECO:0000314"/>
    <property type="project" value="UniProtKB"/>
</dbReference>
<dbReference type="GO" id="GO:0005886">
    <property type="term" value="C:plasma membrane"/>
    <property type="evidence" value="ECO:0000314"/>
    <property type="project" value="UniProtKB"/>
</dbReference>
<dbReference type="GO" id="GO:1901612">
    <property type="term" value="F:cardiolipin binding"/>
    <property type="evidence" value="ECO:0000314"/>
    <property type="project" value="UniProtKB"/>
</dbReference>
<dbReference type="GO" id="GO:0019992">
    <property type="term" value="F:diacylglycerol binding"/>
    <property type="evidence" value="ECO:0000314"/>
    <property type="project" value="UniProtKB"/>
</dbReference>
<dbReference type="GO" id="GO:0008429">
    <property type="term" value="F:phosphatidylethanolamine binding"/>
    <property type="evidence" value="ECO:0000314"/>
    <property type="project" value="UniProtKB"/>
</dbReference>
<dbReference type="GO" id="GO:1904121">
    <property type="term" value="F:phosphatidylethanolamine transfer activity"/>
    <property type="evidence" value="ECO:0000305"/>
    <property type="project" value="UniProtKB"/>
</dbReference>
<dbReference type="GO" id="GO:1901611">
    <property type="term" value="F:phosphatidylglycerol binding"/>
    <property type="evidence" value="ECO:0000314"/>
    <property type="project" value="UniProtKB"/>
</dbReference>
<dbReference type="GO" id="GO:0035091">
    <property type="term" value="F:phosphatidylinositol binding"/>
    <property type="evidence" value="ECO:0000314"/>
    <property type="project" value="UniProtKB"/>
</dbReference>
<dbReference type="GO" id="GO:0015574">
    <property type="term" value="F:trehalose transmembrane transporter activity"/>
    <property type="evidence" value="ECO:0000314"/>
    <property type="project" value="UniProtKB"/>
</dbReference>
<dbReference type="GO" id="GO:0042546">
    <property type="term" value="P:cell wall biogenesis"/>
    <property type="evidence" value="ECO:0000314"/>
    <property type="project" value="UniProtKB"/>
</dbReference>
<dbReference type="GO" id="GO:0071555">
    <property type="term" value="P:cell wall organization"/>
    <property type="evidence" value="ECO:0007669"/>
    <property type="project" value="UniProtKB-KW"/>
</dbReference>
<dbReference type="GO" id="GO:0071769">
    <property type="term" value="P:mycolate cell wall layer assembly"/>
    <property type="evidence" value="ECO:0000314"/>
    <property type="project" value="UniProtKB"/>
</dbReference>
<dbReference type="GO" id="GO:0071768">
    <property type="term" value="P:mycolic acid biosynthetic process"/>
    <property type="evidence" value="ECO:0000314"/>
    <property type="project" value="UniProtKB"/>
</dbReference>
<dbReference type="GO" id="GO:0015914">
    <property type="term" value="P:phospholipid transport"/>
    <property type="evidence" value="ECO:0000305"/>
    <property type="project" value="UniProtKB"/>
</dbReference>
<dbReference type="GO" id="GO:0042391">
    <property type="term" value="P:regulation of membrane potential"/>
    <property type="evidence" value="ECO:0000314"/>
    <property type="project" value="UniProtKB"/>
</dbReference>
<dbReference type="GO" id="GO:0046677">
    <property type="term" value="P:response to antibiotic"/>
    <property type="evidence" value="ECO:0000315"/>
    <property type="project" value="UniProtKB"/>
</dbReference>
<dbReference type="GO" id="GO:0009410">
    <property type="term" value="P:response to xenobiotic stimulus"/>
    <property type="evidence" value="ECO:0000314"/>
    <property type="project" value="UniProtKB"/>
</dbReference>
<dbReference type="GO" id="GO:0015771">
    <property type="term" value="P:trehalose transport"/>
    <property type="evidence" value="ECO:0000314"/>
    <property type="project" value="UniProtKB"/>
</dbReference>
<dbReference type="Gene3D" id="1.20.1640.10">
    <property type="entry name" value="Multidrug efflux transporter AcrB transmembrane domain"/>
    <property type="match status" value="2"/>
</dbReference>
<dbReference type="InterPro" id="IPR004869">
    <property type="entry name" value="MMPL_dom"/>
</dbReference>
<dbReference type="InterPro" id="IPR050545">
    <property type="entry name" value="Mycobact_MmpL"/>
</dbReference>
<dbReference type="PANTHER" id="PTHR33406">
    <property type="entry name" value="MEMBRANE PROTEIN MJ1562-RELATED"/>
    <property type="match status" value="1"/>
</dbReference>
<dbReference type="PANTHER" id="PTHR33406:SF11">
    <property type="entry name" value="MEMBRANE PROTEIN SCO6666-RELATED"/>
    <property type="match status" value="1"/>
</dbReference>
<dbReference type="Pfam" id="PF03176">
    <property type="entry name" value="MMPL"/>
    <property type="match status" value="2"/>
</dbReference>
<dbReference type="SUPFAM" id="SSF82866">
    <property type="entry name" value="Multidrug efflux transporter AcrB transmembrane domain"/>
    <property type="match status" value="2"/>
</dbReference>
<gene>
    <name evidence="10 11 12 13 14 15 16 22" type="primary">mmpL3</name>
    <name evidence="21" type="ordered locus">MSMEG_0250</name>
    <name evidence="22" type="ordered locus">MSMEI_0243</name>
</gene>
<evidence type="ECO:0000255" key="1"/>
<evidence type="ECO:0000256" key="2">
    <source>
        <dbReference type="SAM" id="MobiDB-lite"/>
    </source>
</evidence>
<evidence type="ECO:0000269" key="3">
    <source>
    </source>
</evidence>
<evidence type="ECO:0000269" key="4">
    <source>
    </source>
</evidence>
<evidence type="ECO:0000269" key="5">
    <source>
    </source>
</evidence>
<evidence type="ECO:0000269" key="6">
    <source>
    </source>
</evidence>
<evidence type="ECO:0000269" key="7">
    <source>
    </source>
</evidence>
<evidence type="ECO:0000269" key="8">
    <source>
    </source>
</evidence>
<evidence type="ECO:0000269" key="9">
    <source>
    </source>
</evidence>
<evidence type="ECO:0000303" key="10">
    <source>
    </source>
</evidence>
<evidence type="ECO:0000303" key="11">
    <source>
    </source>
</evidence>
<evidence type="ECO:0000303" key="12">
    <source>
    </source>
</evidence>
<evidence type="ECO:0000303" key="13">
    <source>
    </source>
</evidence>
<evidence type="ECO:0000303" key="14">
    <source>
    </source>
</evidence>
<evidence type="ECO:0000303" key="15">
    <source>
    </source>
</evidence>
<evidence type="ECO:0000303" key="16">
    <source>
    </source>
</evidence>
<evidence type="ECO:0000305" key="17"/>
<evidence type="ECO:0000305" key="18">
    <source>
    </source>
</evidence>
<evidence type="ECO:0000305" key="19">
    <source>
    </source>
</evidence>
<evidence type="ECO:0000305" key="20">
    <source>
    </source>
</evidence>
<evidence type="ECO:0000312" key="21">
    <source>
        <dbReference type="EMBL" id="ABK74656.1"/>
    </source>
</evidence>
<evidence type="ECO:0000312" key="22">
    <source>
        <dbReference type="EMBL" id="AFP36724.1"/>
    </source>
</evidence>
<evidence type="ECO:0000312" key="23">
    <source>
        <dbReference type="Proteomes" id="UP000000757"/>
    </source>
</evidence>
<evidence type="ECO:0000312" key="24">
    <source>
        <dbReference type="Proteomes" id="UP000006158"/>
    </source>
</evidence>
<evidence type="ECO:0007744" key="25">
    <source>
        <dbReference type="PDB" id="6AJF"/>
    </source>
</evidence>
<evidence type="ECO:0007744" key="26">
    <source>
        <dbReference type="PDB" id="6AJG"/>
    </source>
</evidence>
<evidence type="ECO:0007744" key="27">
    <source>
        <dbReference type="PDB" id="6AJH"/>
    </source>
</evidence>
<evidence type="ECO:0007744" key="28">
    <source>
        <dbReference type="PDB" id="6AJI"/>
    </source>
</evidence>
<evidence type="ECO:0007744" key="29">
    <source>
        <dbReference type="PDB" id="6AJJ"/>
    </source>
</evidence>
<evidence type="ECO:0007744" key="30">
    <source>
        <dbReference type="PDB" id="6N40"/>
    </source>
</evidence>
<evidence type="ECO:0007744" key="31">
    <source>
        <dbReference type="PDB" id="6OR2"/>
    </source>
</evidence>
<evidence type="ECO:0007744" key="32">
    <source>
        <dbReference type="PDB" id="7C2M"/>
    </source>
</evidence>
<evidence type="ECO:0007744" key="33">
    <source>
        <dbReference type="PDB" id="7C2N"/>
    </source>
</evidence>
<evidence type="ECO:0007829" key="34">
    <source>
        <dbReference type="PDB" id="6AJG"/>
    </source>
</evidence>
<evidence type="ECO:0007829" key="35">
    <source>
        <dbReference type="PDB" id="6OR2"/>
    </source>
</evidence>
<evidence type="ECO:0007829" key="36">
    <source>
        <dbReference type="PDB" id="7C2M"/>
    </source>
</evidence>
<evidence type="ECO:0007829" key="37">
    <source>
        <dbReference type="PDB" id="7C2N"/>
    </source>
</evidence>
<evidence type="ECO:0007829" key="38">
    <source>
        <dbReference type="PDB" id="7K7M"/>
    </source>
</evidence>
<evidence type="ECO:0007829" key="39">
    <source>
        <dbReference type="PDB" id="7K8B"/>
    </source>
</evidence>
<evidence type="ECO:0007829" key="40">
    <source>
        <dbReference type="PDB" id="7N6B"/>
    </source>
</evidence>
<evidence type="ECO:0007829" key="41">
    <source>
        <dbReference type="PDB" id="7WNX"/>
    </source>
</evidence>
<evidence type="ECO:0007829" key="42">
    <source>
        <dbReference type="PDB" id="8QKK"/>
    </source>
</evidence>
<name>MMPL3_MYCS2</name>
<protein>
    <recommendedName>
        <fullName evidence="17">Trehalose monomycolate exporter MmpL3</fullName>
        <shortName evidence="17">TMM exporter MmpL3</shortName>
    </recommendedName>
    <alternativeName>
        <fullName evidence="14">MmpL3 transporter</fullName>
    </alternativeName>
    <alternativeName>
        <fullName evidence="11 13 14 15 16">Mycobacterial membrane protein large 3</fullName>
    </alternativeName>
</protein>